<protein>
    <recommendedName>
        <fullName evidence="2">Elongation factor G, mitochondrial</fullName>
        <shortName evidence="2">EF-Gmt</shortName>
    </recommendedName>
    <alternativeName>
        <fullName evidence="2">Elongation factor G 1, mitochondrial</fullName>
        <shortName evidence="2">mEF-G 1</shortName>
    </alternativeName>
    <alternativeName>
        <fullName evidence="2">Elongation factor G1</fullName>
    </alternativeName>
</protein>
<accession>B4JQM7</accession>
<reference key="1">
    <citation type="journal article" date="2007" name="Nature">
        <title>Evolution of genes and genomes on the Drosophila phylogeny.</title>
        <authorList>
            <consortium name="Drosophila 12 genomes consortium"/>
        </authorList>
    </citation>
    <scope>NUCLEOTIDE SEQUENCE [LARGE SCALE GENOMIC DNA]</scope>
    <source>
        <strain>Tucson 15287-2541.00</strain>
    </source>
</reference>
<feature type="transit peptide" description="Mitochondrion" evidence="2">
    <location>
        <begin position="1"/>
        <end position="16"/>
    </location>
</feature>
<feature type="chain" id="PRO_0000385547" description="Elongation factor G, mitochondrial">
    <location>
        <begin position="17"/>
        <end position="747"/>
    </location>
</feature>
<feature type="domain" description="tr-type G">
    <location>
        <begin position="42"/>
        <end position="319"/>
    </location>
</feature>
<feature type="binding site" evidence="2">
    <location>
        <begin position="51"/>
        <end position="58"/>
    </location>
    <ligand>
        <name>GTP</name>
        <dbReference type="ChEBI" id="CHEBI:37565"/>
    </ligand>
</feature>
<feature type="binding site" evidence="2">
    <location>
        <begin position="118"/>
        <end position="122"/>
    </location>
    <ligand>
        <name>GTP</name>
        <dbReference type="ChEBI" id="CHEBI:37565"/>
    </ligand>
</feature>
<feature type="binding site" evidence="2">
    <location>
        <begin position="172"/>
        <end position="175"/>
    </location>
    <ligand>
        <name>GTP</name>
        <dbReference type="ChEBI" id="CHEBI:37565"/>
    </ligand>
</feature>
<comment type="function">
    <text evidence="2">Mitochondrial GTPase that catalyzes the GTP-dependent ribosomal translocation step during translation elongation. During this step, the ribosome changes from the pre-translocational (PRE) to the post-translocational (POST) state as the newly formed A-site-bound peptidyl-tRNA and P-site-bound deacylated tRNA move to the P and E sites, respectively. Catalyzes the coordinated movement of the two tRNA molecules, the mRNA and conformational changes in the ribosome. Essential during development as it acts as a retrograde signal from mitochondria to the nucleus to slow down cell proliferation if mitochondrial energy output is low (By similarity).</text>
</comment>
<comment type="pathway">
    <text evidence="2">Protein biosynthesis; polypeptide chain elongation.</text>
</comment>
<comment type="subcellular location">
    <subcellularLocation>
        <location evidence="2">Mitochondrion</location>
    </subcellularLocation>
</comment>
<comment type="similarity">
    <text evidence="3">Belongs to the TRAFAC class translation factor GTPase superfamily. Classic translation factor GTPase family. EF-G/EF-2 subfamily.</text>
</comment>
<keyword id="KW-0251">Elongation factor</keyword>
<keyword id="KW-0342">GTP-binding</keyword>
<keyword id="KW-0496">Mitochondrion</keyword>
<keyword id="KW-0547">Nucleotide-binding</keyword>
<keyword id="KW-0648">Protein biosynthesis</keyword>
<keyword id="KW-1185">Reference proteome</keyword>
<keyword id="KW-0809">Transit peptide</keyword>
<evidence type="ECO:0000250" key="1">
    <source>
        <dbReference type="UniProtKB" id="Q9VM33"/>
    </source>
</evidence>
<evidence type="ECO:0000255" key="2">
    <source>
        <dbReference type="HAMAP-Rule" id="MF_03061"/>
    </source>
</evidence>
<evidence type="ECO:0000305" key="3"/>
<proteinExistence type="inferred from homology"/>
<name>EFGM_DROGR</name>
<gene>
    <name evidence="1" type="primary">mEFG1</name>
    <name evidence="1" type="synonym">ico</name>
    <name type="ORF">GH13155</name>
</gene>
<sequence length="747" mass="83917">MSLIMRVLNGNLSLRLSAMKTVCQLQCGYSSHAKYAEHKSIERIRNIGISAHIDSGKTTLTERILFYTGRIAEMHEVRGKDNVGATMDSMELERQRGITIQSAATYTMWKDTNINIIDTPGHVDFTVEVERALRVLDGAVLVLCAVGGVQSQTLTVNRQMKRYNVPCLAFINKLDRLGSNPNRVLSQLRSKMNHNAAFIQLPIGVESHCKGLVDLVQERAVYFEGENGADLRLDEIPQEMRVESQERRQELIEHLSNADETFGELFLEEKPFTEADIKAALRRTCIKRTFTPVLVGTALKNKGVQPLLDAIIDYLPNPGEVENLAYIEHEGKEKQQIVLNPARDGKDPFMGLAFKLEAGRFGQLTYLRCYQGVLRKGDNIFNARTNKKVRIARLVRLHSNQMEDVNEVFAGDIFALFGVDCASGDTFTTNPKNNMAMESIFVPEPVVSMAIKPNNTKDRDNFSKAIARFTKEDPTFHFYFDNDVKETLVSGMGELHLEIYAQRMEREYGCPVTLGKPKVAFRETLVGPCEFDFLHKKQSGGSGQYARIIGLMEPLPPNQNTLLEFVDETVGTNVPKQFVPGVEKGYREMCERGMLSGHKLSGIRFRLQDGGHHIVDSSELAFMLAAHGAIKEVFQNGSWQILEPIMLVEVTAPEEFQGAVMGHLSKRHGIITGTEGTEGWFTVYAEVPLNDMFGYASELRSSTQGKGEFTMEYSRYSPCLPDVQDQIVRQYQESQGMGQAEKKKKKN</sequence>
<dbReference type="EMBL" id="CH916372">
    <property type="protein sequence ID" value="EDV99207.1"/>
    <property type="molecule type" value="Genomic_DNA"/>
</dbReference>
<dbReference type="SMR" id="B4JQM7"/>
<dbReference type="FunCoup" id="B4JQM7">
    <property type="interactions" value="2148"/>
</dbReference>
<dbReference type="STRING" id="7222.B4JQM7"/>
<dbReference type="EnsemblMetazoa" id="FBtr0148569">
    <property type="protein sequence ID" value="FBpp0147061"/>
    <property type="gene ID" value="FBgn0120632"/>
</dbReference>
<dbReference type="EnsemblMetazoa" id="XM_001993246.2">
    <property type="protein sequence ID" value="XP_001993282.1"/>
    <property type="gene ID" value="LOC6567084"/>
</dbReference>
<dbReference type="GeneID" id="6567084"/>
<dbReference type="KEGG" id="dgr:6567084"/>
<dbReference type="CTD" id="34004"/>
<dbReference type="eggNOG" id="KOG0465">
    <property type="taxonomic scope" value="Eukaryota"/>
</dbReference>
<dbReference type="HOGENOM" id="CLU_002794_4_1_1"/>
<dbReference type="InParanoid" id="B4JQM7"/>
<dbReference type="OMA" id="GQFAKVQ"/>
<dbReference type="OrthoDB" id="198619at2759"/>
<dbReference type="PhylomeDB" id="B4JQM7"/>
<dbReference type="UniPathway" id="UPA00345"/>
<dbReference type="Proteomes" id="UP000001070">
    <property type="component" value="Unassembled WGS sequence"/>
</dbReference>
<dbReference type="GO" id="GO:0005739">
    <property type="term" value="C:mitochondrion"/>
    <property type="evidence" value="ECO:0007669"/>
    <property type="project" value="UniProtKB-SubCell"/>
</dbReference>
<dbReference type="GO" id="GO:0005634">
    <property type="term" value="C:nucleus"/>
    <property type="evidence" value="ECO:0007669"/>
    <property type="project" value="EnsemblMetazoa"/>
</dbReference>
<dbReference type="GO" id="GO:0005525">
    <property type="term" value="F:GTP binding"/>
    <property type="evidence" value="ECO:0007669"/>
    <property type="project" value="UniProtKB-UniRule"/>
</dbReference>
<dbReference type="GO" id="GO:0003924">
    <property type="term" value="F:GTPase activity"/>
    <property type="evidence" value="ECO:0000250"/>
    <property type="project" value="UniProtKB"/>
</dbReference>
<dbReference type="GO" id="GO:0003746">
    <property type="term" value="F:translation elongation factor activity"/>
    <property type="evidence" value="ECO:0000250"/>
    <property type="project" value="UniProtKB"/>
</dbReference>
<dbReference type="GO" id="GO:0070125">
    <property type="term" value="P:mitochondrial translational elongation"/>
    <property type="evidence" value="ECO:0000250"/>
    <property type="project" value="UniProtKB"/>
</dbReference>
<dbReference type="CDD" id="cd01886">
    <property type="entry name" value="EF-G"/>
    <property type="match status" value="1"/>
</dbReference>
<dbReference type="CDD" id="cd16262">
    <property type="entry name" value="EFG_III"/>
    <property type="match status" value="1"/>
</dbReference>
<dbReference type="CDD" id="cd01434">
    <property type="entry name" value="EFG_mtEFG1_IV"/>
    <property type="match status" value="1"/>
</dbReference>
<dbReference type="CDD" id="cd04097">
    <property type="entry name" value="mtEFG1_C"/>
    <property type="match status" value="1"/>
</dbReference>
<dbReference type="CDD" id="cd04091">
    <property type="entry name" value="mtEFG1_II_like"/>
    <property type="match status" value="1"/>
</dbReference>
<dbReference type="FunFam" id="3.30.230.10:FF:000003">
    <property type="entry name" value="Elongation factor G"/>
    <property type="match status" value="1"/>
</dbReference>
<dbReference type="FunFam" id="3.30.70.240:FF:000001">
    <property type="entry name" value="Elongation factor G"/>
    <property type="match status" value="1"/>
</dbReference>
<dbReference type="FunFam" id="3.30.70.870:FF:000001">
    <property type="entry name" value="Elongation factor G"/>
    <property type="match status" value="1"/>
</dbReference>
<dbReference type="FunFam" id="2.40.30.10:FF:000022">
    <property type="entry name" value="Elongation factor G, mitochondrial"/>
    <property type="match status" value="1"/>
</dbReference>
<dbReference type="FunFam" id="3.40.50.300:FF:000539">
    <property type="entry name" value="Elongation factor G, mitochondrial"/>
    <property type="match status" value="1"/>
</dbReference>
<dbReference type="Gene3D" id="3.30.230.10">
    <property type="match status" value="1"/>
</dbReference>
<dbReference type="Gene3D" id="3.30.70.240">
    <property type="match status" value="1"/>
</dbReference>
<dbReference type="Gene3D" id="3.30.70.870">
    <property type="entry name" value="Elongation Factor G (Translational Gtpase), domain 3"/>
    <property type="match status" value="1"/>
</dbReference>
<dbReference type="Gene3D" id="3.40.50.300">
    <property type="entry name" value="P-loop containing nucleotide triphosphate hydrolases"/>
    <property type="match status" value="1"/>
</dbReference>
<dbReference type="Gene3D" id="2.40.30.10">
    <property type="entry name" value="Translation factors"/>
    <property type="match status" value="1"/>
</dbReference>
<dbReference type="HAMAP" id="MF_00054_B">
    <property type="entry name" value="EF_G_EF_2_B"/>
    <property type="match status" value="1"/>
</dbReference>
<dbReference type="InterPro" id="IPR041095">
    <property type="entry name" value="EFG_II"/>
</dbReference>
<dbReference type="InterPro" id="IPR009022">
    <property type="entry name" value="EFG_III"/>
</dbReference>
<dbReference type="InterPro" id="IPR035647">
    <property type="entry name" value="EFG_III/V"/>
</dbReference>
<dbReference type="InterPro" id="IPR047872">
    <property type="entry name" value="EFG_IV"/>
</dbReference>
<dbReference type="InterPro" id="IPR035649">
    <property type="entry name" value="EFG_V"/>
</dbReference>
<dbReference type="InterPro" id="IPR000640">
    <property type="entry name" value="EFG_V-like"/>
</dbReference>
<dbReference type="InterPro" id="IPR004161">
    <property type="entry name" value="EFTu-like_2"/>
</dbReference>
<dbReference type="InterPro" id="IPR031157">
    <property type="entry name" value="G_TR_CS"/>
</dbReference>
<dbReference type="InterPro" id="IPR027417">
    <property type="entry name" value="P-loop_NTPase"/>
</dbReference>
<dbReference type="InterPro" id="IPR020568">
    <property type="entry name" value="Ribosomal_Su5_D2-typ_SF"/>
</dbReference>
<dbReference type="InterPro" id="IPR014721">
    <property type="entry name" value="Ribsml_uS5_D2-typ_fold_subgr"/>
</dbReference>
<dbReference type="InterPro" id="IPR005225">
    <property type="entry name" value="Small_GTP-bd"/>
</dbReference>
<dbReference type="InterPro" id="IPR000795">
    <property type="entry name" value="T_Tr_GTP-bd_dom"/>
</dbReference>
<dbReference type="InterPro" id="IPR009000">
    <property type="entry name" value="Transl_B-barrel_sf"/>
</dbReference>
<dbReference type="InterPro" id="IPR004540">
    <property type="entry name" value="Transl_elong_EFG/EF2"/>
</dbReference>
<dbReference type="InterPro" id="IPR005517">
    <property type="entry name" value="Transl_elong_EFG/EF2_IV"/>
</dbReference>
<dbReference type="NCBIfam" id="TIGR00484">
    <property type="entry name" value="EF-G"/>
    <property type="match status" value="1"/>
</dbReference>
<dbReference type="NCBIfam" id="NF009381">
    <property type="entry name" value="PRK12740.1-5"/>
    <property type="match status" value="1"/>
</dbReference>
<dbReference type="NCBIfam" id="TIGR00231">
    <property type="entry name" value="small_GTP"/>
    <property type="match status" value="1"/>
</dbReference>
<dbReference type="PANTHER" id="PTHR43636">
    <property type="entry name" value="ELONGATION FACTOR G, MITOCHONDRIAL"/>
    <property type="match status" value="1"/>
</dbReference>
<dbReference type="PANTHER" id="PTHR43636:SF2">
    <property type="entry name" value="ELONGATION FACTOR G, MITOCHONDRIAL"/>
    <property type="match status" value="1"/>
</dbReference>
<dbReference type="Pfam" id="PF00679">
    <property type="entry name" value="EFG_C"/>
    <property type="match status" value="1"/>
</dbReference>
<dbReference type="Pfam" id="PF14492">
    <property type="entry name" value="EFG_III"/>
    <property type="match status" value="1"/>
</dbReference>
<dbReference type="Pfam" id="PF03764">
    <property type="entry name" value="EFG_IV"/>
    <property type="match status" value="1"/>
</dbReference>
<dbReference type="Pfam" id="PF00009">
    <property type="entry name" value="GTP_EFTU"/>
    <property type="match status" value="1"/>
</dbReference>
<dbReference type="Pfam" id="PF03144">
    <property type="entry name" value="GTP_EFTU_D2"/>
    <property type="match status" value="1"/>
</dbReference>
<dbReference type="PRINTS" id="PR00315">
    <property type="entry name" value="ELONGATNFCT"/>
</dbReference>
<dbReference type="SMART" id="SM00838">
    <property type="entry name" value="EFG_C"/>
    <property type="match status" value="1"/>
</dbReference>
<dbReference type="SMART" id="SM00889">
    <property type="entry name" value="EFG_IV"/>
    <property type="match status" value="1"/>
</dbReference>
<dbReference type="SUPFAM" id="SSF54980">
    <property type="entry name" value="EF-G C-terminal domain-like"/>
    <property type="match status" value="2"/>
</dbReference>
<dbReference type="SUPFAM" id="SSF52540">
    <property type="entry name" value="P-loop containing nucleoside triphosphate hydrolases"/>
    <property type="match status" value="1"/>
</dbReference>
<dbReference type="SUPFAM" id="SSF54211">
    <property type="entry name" value="Ribosomal protein S5 domain 2-like"/>
    <property type="match status" value="1"/>
</dbReference>
<dbReference type="SUPFAM" id="SSF50447">
    <property type="entry name" value="Translation proteins"/>
    <property type="match status" value="1"/>
</dbReference>
<dbReference type="PROSITE" id="PS00301">
    <property type="entry name" value="G_TR_1"/>
    <property type="match status" value="1"/>
</dbReference>
<dbReference type="PROSITE" id="PS51722">
    <property type="entry name" value="G_TR_2"/>
    <property type="match status" value="1"/>
</dbReference>
<organism>
    <name type="scientific">Drosophila grimshawi</name>
    <name type="common">Hawaiian fruit fly</name>
    <name type="synonym">Idiomyia grimshawi</name>
    <dbReference type="NCBI Taxonomy" id="7222"/>
    <lineage>
        <taxon>Eukaryota</taxon>
        <taxon>Metazoa</taxon>
        <taxon>Ecdysozoa</taxon>
        <taxon>Arthropoda</taxon>
        <taxon>Hexapoda</taxon>
        <taxon>Insecta</taxon>
        <taxon>Pterygota</taxon>
        <taxon>Neoptera</taxon>
        <taxon>Endopterygota</taxon>
        <taxon>Diptera</taxon>
        <taxon>Brachycera</taxon>
        <taxon>Muscomorpha</taxon>
        <taxon>Ephydroidea</taxon>
        <taxon>Drosophilidae</taxon>
        <taxon>Drosophila</taxon>
        <taxon>Hawaiian Drosophila</taxon>
    </lineage>
</organism>